<gene>
    <name type="primary">AIG1</name>
    <name type="ORF">CGI-103</name>
</gene>
<evidence type="ECO:0000255" key="1"/>
<evidence type="ECO:0000269" key="2">
    <source>
    </source>
</evidence>
<evidence type="ECO:0000269" key="3">
    <source>
    </source>
</evidence>
<evidence type="ECO:0000303" key="4">
    <source>
    </source>
</evidence>
<evidence type="ECO:0000305" key="5"/>
<evidence type="ECO:0000305" key="6">
    <source>
    </source>
</evidence>
<evidence type="ECO:0000305" key="7">
    <source>
    </source>
</evidence>
<keyword id="KW-0025">Alternative splicing</keyword>
<keyword id="KW-1003">Cell membrane</keyword>
<keyword id="KW-0378">Hydrolase</keyword>
<keyword id="KW-0443">Lipid metabolism</keyword>
<keyword id="KW-0472">Membrane</keyword>
<keyword id="KW-1267">Proteomics identification</keyword>
<keyword id="KW-1185">Reference proteome</keyword>
<keyword id="KW-0812">Transmembrane</keyword>
<keyword id="KW-1133">Transmembrane helix</keyword>
<reference key="1">
    <citation type="journal article" date="2001" name="Mol. Cells">
        <title>Cloning of androgen-inducible gene 1 (AIG1) from human dermal papilla cells.</title>
        <authorList>
            <person name="Seo J."/>
            <person name="Kim J."/>
            <person name="Kim M."/>
        </authorList>
    </citation>
    <scope>NUCLEOTIDE SEQUENCE [MRNA] (ISOFORM 1)</scope>
    <scope>TISSUE SPECIFICITY</scope>
    <scope>INDUCTION</scope>
    <source>
        <tissue>Hair follicle dermal papilla</tissue>
    </source>
</reference>
<reference key="2">
    <citation type="journal article" date="2000" name="Genome Res.">
        <title>Identification of novel human genes evolutionarily conserved in Caenorhabditis elegans by comparative proteomics.</title>
        <authorList>
            <person name="Lai C.-H."/>
            <person name="Chou C.-Y."/>
            <person name="Ch'ang L.-Y."/>
            <person name="Liu C.-S."/>
            <person name="Lin W.-C."/>
        </authorList>
    </citation>
    <scope>NUCLEOTIDE SEQUENCE [LARGE SCALE MRNA] (ISOFORM 4)</scope>
</reference>
<reference key="3">
    <citation type="journal article" date="2004" name="Nat. Genet.">
        <title>Complete sequencing and characterization of 21,243 full-length human cDNAs.</title>
        <authorList>
            <person name="Ota T."/>
            <person name="Suzuki Y."/>
            <person name="Nishikawa T."/>
            <person name="Otsuki T."/>
            <person name="Sugiyama T."/>
            <person name="Irie R."/>
            <person name="Wakamatsu A."/>
            <person name="Hayashi K."/>
            <person name="Sato H."/>
            <person name="Nagai K."/>
            <person name="Kimura K."/>
            <person name="Makita H."/>
            <person name="Sekine M."/>
            <person name="Obayashi M."/>
            <person name="Nishi T."/>
            <person name="Shibahara T."/>
            <person name="Tanaka T."/>
            <person name="Ishii S."/>
            <person name="Yamamoto J."/>
            <person name="Saito K."/>
            <person name="Kawai Y."/>
            <person name="Isono Y."/>
            <person name="Nakamura Y."/>
            <person name="Nagahari K."/>
            <person name="Murakami K."/>
            <person name="Yasuda T."/>
            <person name="Iwayanagi T."/>
            <person name="Wagatsuma M."/>
            <person name="Shiratori A."/>
            <person name="Sudo H."/>
            <person name="Hosoiri T."/>
            <person name="Kaku Y."/>
            <person name="Kodaira H."/>
            <person name="Kondo H."/>
            <person name="Sugawara M."/>
            <person name="Takahashi M."/>
            <person name="Kanda K."/>
            <person name="Yokoi T."/>
            <person name="Furuya T."/>
            <person name="Kikkawa E."/>
            <person name="Omura Y."/>
            <person name="Abe K."/>
            <person name="Kamihara K."/>
            <person name="Katsuta N."/>
            <person name="Sato K."/>
            <person name="Tanikawa M."/>
            <person name="Yamazaki M."/>
            <person name="Ninomiya K."/>
            <person name="Ishibashi T."/>
            <person name="Yamashita H."/>
            <person name="Murakawa K."/>
            <person name="Fujimori K."/>
            <person name="Tanai H."/>
            <person name="Kimata M."/>
            <person name="Watanabe M."/>
            <person name="Hiraoka S."/>
            <person name="Chiba Y."/>
            <person name="Ishida S."/>
            <person name="Ono Y."/>
            <person name="Takiguchi S."/>
            <person name="Watanabe S."/>
            <person name="Yosida M."/>
            <person name="Hotuta T."/>
            <person name="Kusano J."/>
            <person name="Kanehori K."/>
            <person name="Takahashi-Fujii A."/>
            <person name="Hara H."/>
            <person name="Tanase T.-O."/>
            <person name="Nomura Y."/>
            <person name="Togiya S."/>
            <person name="Komai F."/>
            <person name="Hara R."/>
            <person name="Takeuchi K."/>
            <person name="Arita M."/>
            <person name="Imose N."/>
            <person name="Musashino K."/>
            <person name="Yuuki H."/>
            <person name="Oshima A."/>
            <person name="Sasaki N."/>
            <person name="Aotsuka S."/>
            <person name="Yoshikawa Y."/>
            <person name="Matsunawa H."/>
            <person name="Ichihara T."/>
            <person name="Shiohata N."/>
            <person name="Sano S."/>
            <person name="Moriya S."/>
            <person name="Momiyama H."/>
            <person name="Satoh N."/>
            <person name="Takami S."/>
            <person name="Terashima Y."/>
            <person name="Suzuki O."/>
            <person name="Nakagawa S."/>
            <person name="Senoh A."/>
            <person name="Mizoguchi H."/>
            <person name="Goto Y."/>
            <person name="Shimizu F."/>
            <person name="Wakebe H."/>
            <person name="Hishigaki H."/>
            <person name="Watanabe T."/>
            <person name="Sugiyama A."/>
            <person name="Takemoto M."/>
            <person name="Kawakami B."/>
            <person name="Yamazaki M."/>
            <person name="Watanabe K."/>
            <person name="Kumagai A."/>
            <person name="Itakura S."/>
            <person name="Fukuzumi Y."/>
            <person name="Fujimori Y."/>
            <person name="Komiyama M."/>
            <person name="Tashiro H."/>
            <person name="Tanigami A."/>
            <person name="Fujiwara T."/>
            <person name="Ono T."/>
            <person name="Yamada K."/>
            <person name="Fujii Y."/>
            <person name="Ozaki K."/>
            <person name="Hirao M."/>
            <person name="Ohmori Y."/>
            <person name="Kawabata A."/>
            <person name="Hikiji T."/>
            <person name="Kobatake N."/>
            <person name="Inagaki H."/>
            <person name="Ikema Y."/>
            <person name="Okamoto S."/>
            <person name="Okitani R."/>
            <person name="Kawakami T."/>
            <person name="Noguchi S."/>
            <person name="Itoh T."/>
            <person name="Shigeta K."/>
            <person name="Senba T."/>
            <person name="Matsumura K."/>
            <person name="Nakajima Y."/>
            <person name="Mizuno T."/>
            <person name="Morinaga M."/>
            <person name="Sasaki M."/>
            <person name="Togashi T."/>
            <person name="Oyama M."/>
            <person name="Hata H."/>
            <person name="Watanabe M."/>
            <person name="Komatsu T."/>
            <person name="Mizushima-Sugano J."/>
            <person name="Satoh T."/>
            <person name="Shirai Y."/>
            <person name="Takahashi Y."/>
            <person name="Nakagawa K."/>
            <person name="Okumura K."/>
            <person name="Nagase T."/>
            <person name="Nomura N."/>
            <person name="Kikuchi H."/>
            <person name="Masuho Y."/>
            <person name="Yamashita R."/>
            <person name="Nakai K."/>
            <person name="Yada T."/>
            <person name="Nakamura Y."/>
            <person name="Ohara O."/>
            <person name="Isogai T."/>
            <person name="Sugano S."/>
        </authorList>
    </citation>
    <scope>NUCLEOTIDE SEQUENCE [LARGE SCALE MRNA] (ISOFORMS 2 AND 6)</scope>
</reference>
<reference key="4">
    <citation type="journal article" date="2007" name="BMC Genomics">
        <title>The full-ORF clone resource of the German cDNA consortium.</title>
        <authorList>
            <person name="Bechtel S."/>
            <person name="Rosenfelder H."/>
            <person name="Duda A."/>
            <person name="Schmidt C.P."/>
            <person name="Ernst U."/>
            <person name="Wellenreuther R."/>
            <person name="Mehrle A."/>
            <person name="Schuster C."/>
            <person name="Bahr A."/>
            <person name="Bloecker H."/>
            <person name="Heubner D."/>
            <person name="Hoerlein A."/>
            <person name="Michel G."/>
            <person name="Wedler H."/>
            <person name="Koehrer K."/>
            <person name="Ottenwaelder B."/>
            <person name="Poustka A."/>
            <person name="Wiemann S."/>
            <person name="Schupp I."/>
        </authorList>
    </citation>
    <scope>NUCLEOTIDE SEQUENCE [LARGE SCALE MRNA] (ISOFORMS 3 AND 5)</scope>
    <source>
        <tissue>Prostate</tissue>
        <tissue>Rectum tumor</tissue>
    </source>
</reference>
<reference key="5">
    <citation type="journal article" date="2003" name="Nature">
        <title>The DNA sequence and analysis of human chromosome 6.</title>
        <authorList>
            <person name="Mungall A.J."/>
            <person name="Palmer S.A."/>
            <person name="Sims S.K."/>
            <person name="Edwards C.A."/>
            <person name="Ashurst J.L."/>
            <person name="Wilming L."/>
            <person name="Jones M.C."/>
            <person name="Horton R."/>
            <person name="Hunt S.E."/>
            <person name="Scott C.E."/>
            <person name="Gilbert J.G.R."/>
            <person name="Clamp M.E."/>
            <person name="Bethel G."/>
            <person name="Milne S."/>
            <person name="Ainscough R."/>
            <person name="Almeida J.P."/>
            <person name="Ambrose K.D."/>
            <person name="Andrews T.D."/>
            <person name="Ashwell R.I.S."/>
            <person name="Babbage A.K."/>
            <person name="Bagguley C.L."/>
            <person name="Bailey J."/>
            <person name="Banerjee R."/>
            <person name="Barker D.J."/>
            <person name="Barlow K.F."/>
            <person name="Bates K."/>
            <person name="Beare D.M."/>
            <person name="Beasley H."/>
            <person name="Beasley O."/>
            <person name="Bird C.P."/>
            <person name="Blakey S.E."/>
            <person name="Bray-Allen S."/>
            <person name="Brook J."/>
            <person name="Brown A.J."/>
            <person name="Brown J.Y."/>
            <person name="Burford D.C."/>
            <person name="Burrill W."/>
            <person name="Burton J."/>
            <person name="Carder C."/>
            <person name="Carter N.P."/>
            <person name="Chapman J.C."/>
            <person name="Clark S.Y."/>
            <person name="Clark G."/>
            <person name="Clee C.M."/>
            <person name="Clegg S."/>
            <person name="Cobley V."/>
            <person name="Collier R.E."/>
            <person name="Collins J.E."/>
            <person name="Colman L.K."/>
            <person name="Corby N.R."/>
            <person name="Coville G.J."/>
            <person name="Culley K.M."/>
            <person name="Dhami P."/>
            <person name="Davies J."/>
            <person name="Dunn M."/>
            <person name="Earthrowl M.E."/>
            <person name="Ellington A.E."/>
            <person name="Evans K.A."/>
            <person name="Faulkner L."/>
            <person name="Francis M.D."/>
            <person name="Frankish A."/>
            <person name="Frankland J."/>
            <person name="French L."/>
            <person name="Garner P."/>
            <person name="Garnett J."/>
            <person name="Ghori M.J."/>
            <person name="Gilby L.M."/>
            <person name="Gillson C.J."/>
            <person name="Glithero R.J."/>
            <person name="Grafham D.V."/>
            <person name="Grant M."/>
            <person name="Gribble S."/>
            <person name="Griffiths C."/>
            <person name="Griffiths M.N.D."/>
            <person name="Hall R."/>
            <person name="Halls K.S."/>
            <person name="Hammond S."/>
            <person name="Harley J.L."/>
            <person name="Hart E.A."/>
            <person name="Heath P.D."/>
            <person name="Heathcott R."/>
            <person name="Holmes S.J."/>
            <person name="Howden P.J."/>
            <person name="Howe K.L."/>
            <person name="Howell G.R."/>
            <person name="Huckle E."/>
            <person name="Humphray S.J."/>
            <person name="Humphries M.D."/>
            <person name="Hunt A.R."/>
            <person name="Johnson C.M."/>
            <person name="Joy A.A."/>
            <person name="Kay M."/>
            <person name="Keenan S.J."/>
            <person name="Kimberley A.M."/>
            <person name="King A."/>
            <person name="Laird G.K."/>
            <person name="Langford C."/>
            <person name="Lawlor S."/>
            <person name="Leongamornlert D.A."/>
            <person name="Leversha M."/>
            <person name="Lloyd C.R."/>
            <person name="Lloyd D.M."/>
            <person name="Loveland J.E."/>
            <person name="Lovell J."/>
            <person name="Martin S."/>
            <person name="Mashreghi-Mohammadi M."/>
            <person name="Maslen G.L."/>
            <person name="Matthews L."/>
            <person name="McCann O.T."/>
            <person name="McLaren S.J."/>
            <person name="McLay K."/>
            <person name="McMurray A."/>
            <person name="Moore M.J.F."/>
            <person name="Mullikin J.C."/>
            <person name="Niblett D."/>
            <person name="Nickerson T."/>
            <person name="Novik K.L."/>
            <person name="Oliver K."/>
            <person name="Overton-Larty E.K."/>
            <person name="Parker A."/>
            <person name="Patel R."/>
            <person name="Pearce A.V."/>
            <person name="Peck A.I."/>
            <person name="Phillimore B.J.C.T."/>
            <person name="Phillips S."/>
            <person name="Plumb R.W."/>
            <person name="Porter K.M."/>
            <person name="Ramsey Y."/>
            <person name="Ranby S.A."/>
            <person name="Rice C.M."/>
            <person name="Ross M.T."/>
            <person name="Searle S.M."/>
            <person name="Sehra H.K."/>
            <person name="Sheridan E."/>
            <person name="Skuce C.D."/>
            <person name="Smith S."/>
            <person name="Smith M."/>
            <person name="Spraggon L."/>
            <person name="Squares S.L."/>
            <person name="Steward C.A."/>
            <person name="Sycamore N."/>
            <person name="Tamlyn-Hall G."/>
            <person name="Tester J."/>
            <person name="Theaker A.J."/>
            <person name="Thomas D.W."/>
            <person name="Thorpe A."/>
            <person name="Tracey A."/>
            <person name="Tromans A."/>
            <person name="Tubby B."/>
            <person name="Wall M."/>
            <person name="Wallis J.M."/>
            <person name="West A.P."/>
            <person name="White S.S."/>
            <person name="Whitehead S.L."/>
            <person name="Whittaker H."/>
            <person name="Wild A."/>
            <person name="Willey D.J."/>
            <person name="Wilmer T.E."/>
            <person name="Wood J.M."/>
            <person name="Wray P.W."/>
            <person name="Wyatt J.C."/>
            <person name="Young L."/>
            <person name="Younger R.M."/>
            <person name="Bentley D.R."/>
            <person name="Coulson A."/>
            <person name="Durbin R.M."/>
            <person name="Hubbard T."/>
            <person name="Sulston J.E."/>
            <person name="Dunham I."/>
            <person name="Rogers J."/>
            <person name="Beck S."/>
        </authorList>
    </citation>
    <scope>NUCLEOTIDE SEQUENCE [LARGE SCALE GENOMIC DNA]</scope>
</reference>
<reference key="6">
    <citation type="journal article" date="2004" name="Genome Res.">
        <title>The status, quality, and expansion of the NIH full-length cDNA project: the Mammalian Gene Collection (MGC).</title>
        <authorList>
            <consortium name="The MGC Project Team"/>
        </authorList>
    </citation>
    <scope>NUCLEOTIDE SEQUENCE [LARGE SCALE MRNA] (ISOFORM 1)</scope>
    <source>
        <tissue>Skin</tissue>
    </source>
</reference>
<reference key="7">
    <citation type="journal article" date="2016" name="Nat. Chem. Biol.">
        <title>AIG1 and ADTRP are atypical integral membrane hydrolases that degrade bioactive FAHFAs.</title>
        <authorList>
            <person name="Parsons W.H."/>
            <person name="Kolar M.J."/>
            <person name="Kamat S.S."/>
            <person name="Cognetta A.B. III"/>
            <person name="Hulce J.J."/>
            <person name="Saez E."/>
            <person name="Kahn B.B."/>
            <person name="Saghatelian A."/>
            <person name="Cravatt B.F."/>
        </authorList>
    </citation>
    <scope>FUNCTION</scope>
    <scope>CATALYTIC ACTIVITY</scope>
    <scope>SUBCELLULAR LOCATION</scope>
    <scope>ACTIVITY REGULATION</scope>
    <scope>TOPOLOGY MODEL</scope>
    <scope>SITE</scope>
    <scope>MUTAGENESIS OF THR-43 AND HIS-134</scope>
</reference>
<comment type="function">
    <text evidence="3">Hydrolyzes bioactive fatty-acid esters of hydroxy-fatty acids (FAHFAs), but not other major classes of lipids (PubMed:27018888). Show a preference for FAHFAs with branching distal from the carboxylate head group of the lipids (PubMed:27018888).</text>
</comment>
<comment type="catalytic activity">
    <reaction evidence="3">
        <text>9-hexadecanoyloxy-octadecanoate + H2O = 9-hydroxy-octadecanoate + hexadecanoate + H(+)</text>
        <dbReference type="Rhea" id="RHEA:52052"/>
        <dbReference type="ChEBI" id="CHEBI:7896"/>
        <dbReference type="ChEBI" id="CHEBI:15377"/>
        <dbReference type="ChEBI" id="CHEBI:15378"/>
        <dbReference type="ChEBI" id="CHEBI:83670"/>
        <dbReference type="ChEBI" id="CHEBI:136286"/>
    </reaction>
    <physiologicalReaction direction="left-to-right" evidence="7">
        <dbReference type="Rhea" id="RHEA:52053"/>
    </physiologicalReaction>
</comment>
<comment type="catalytic activity">
    <reaction evidence="3">
        <text>12-hexadecanoyloxy-octadecanoate + H2O = 12-hydroxyoctadecanoate + hexadecanoate + H(+)</text>
        <dbReference type="Rhea" id="RHEA:52056"/>
        <dbReference type="ChEBI" id="CHEBI:7896"/>
        <dbReference type="ChEBI" id="CHEBI:15377"/>
        <dbReference type="ChEBI" id="CHEBI:15378"/>
        <dbReference type="ChEBI" id="CHEBI:83677"/>
        <dbReference type="ChEBI" id="CHEBI:84201"/>
    </reaction>
    <physiologicalReaction direction="left-to-right" evidence="7">
        <dbReference type="Rhea" id="RHEA:52057"/>
    </physiologicalReaction>
</comment>
<comment type="catalytic activity">
    <reaction evidence="3">
        <text>9-(9Z-hexadecenoyloxy)-octadecanoate + H2O = (9Z)-hexadecenoate + 9-hydroxy-octadecanoate + H(+)</text>
        <dbReference type="Rhea" id="RHEA:52068"/>
        <dbReference type="ChEBI" id="CHEBI:15377"/>
        <dbReference type="ChEBI" id="CHEBI:15378"/>
        <dbReference type="ChEBI" id="CHEBI:32372"/>
        <dbReference type="ChEBI" id="CHEBI:136286"/>
        <dbReference type="ChEBI" id="CHEBI:136309"/>
    </reaction>
    <physiologicalReaction direction="left-to-right" evidence="7">
        <dbReference type="Rhea" id="RHEA:52069"/>
    </physiologicalReaction>
</comment>
<comment type="catalytic activity">
    <reaction evidence="3">
        <text>12-(9Z-hexadecenoyloxy)-octadecanoate + H2O = 12-hydroxyoctadecanoate + (9Z)-hexadecenoate + H(+)</text>
        <dbReference type="Rhea" id="RHEA:52072"/>
        <dbReference type="ChEBI" id="CHEBI:15377"/>
        <dbReference type="ChEBI" id="CHEBI:15378"/>
        <dbReference type="ChEBI" id="CHEBI:32372"/>
        <dbReference type="ChEBI" id="CHEBI:84201"/>
        <dbReference type="ChEBI" id="CHEBI:136312"/>
    </reaction>
    <physiologicalReaction direction="left-to-right" evidence="7">
        <dbReference type="Rhea" id="RHEA:52073"/>
    </physiologicalReaction>
</comment>
<comment type="catalytic activity">
    <reaction evidence="3">
        <text>13-(9Z-hexadecenoyloxy)-octadecanoate + H2O = 13-hydroxy-octadecanoate + (9Z)-hexadecenoate + H(+)</text>
        <dbReference type="Rhea" id="RHEA:52076"/>
        <dbReference type="ChEBI" id="CHEBI:15377"/>
        <dbReference type="ChEBI" id="CHEBI:15378"/>
        <dbReference type="ChEBI" id="CHEBI:32372"/>
        <dbReference type="ChEBI" id="CHEBI:136304"/>
        <dbReference type="ChEBI" id="CHEBI:136315"/>
    </reaction>
    <physiologicalReaction direction="left-to-right" evidence="7">
        <dbReference type="Rhea" id="RHEA:52077"/>
    </physiologicalReaction>
</comment>
<comment type="catalytic activity">
    <reaction evidence="3">
        <text>9-octadecanoyloxy-octadecanoate + H2O = 9-hydroxy-octadecanoate + octadecanoate + H(+)</text>
        <dbReference type="Rhea" id="RHEA:52096"/>
        <dbReference type="ChEBI" id="CHEBI:15377"/>
        <dbReference type="ChEBI" id="CHEBI:15378"/>
        <dbReference type="ChEBI" id="CHEBI:25629"/>
        <dbReference type="ChEBI" id="CHEBI:136286"/>
        <dbReference type="ChEBI" id="CHEBI:136373"/>
    </reaction>
    <physiologicalReaction direction="left-to-right" evidence="7">
        <dbReference type="Rhea" id="RHEA:52097"/>
    </physiologicalReaction>
</comment>
<comment type="catalytic activity">
    <reaction evidence="3">
        <text>12-octadecanoyloxy-octadecanoate + H2O = 12-hydroxyoctadecanoate + octadecanoate + H(+)</text>
        <dbReference type="Rhea" id="RHEA:52080"/>
        <dbReference type="ChEBI" id="CHEBI:15377"/>
        <dbReference type="ChEBI" id="CHEBI:15378"/>
        <dbReference type="ChEBI" id="CHEBI:25629"/>
        <dbReference type="ChEBI" id="CHEBI:84201"/>
        <dbReference type="ChEBI" id="CHEBI:136330"/>
    </reaction>
    <physiologicalReaction direction="left-to-right" evidence="7">
        <dbReference type="Rhea" id="RHEA:52081"/>
    </physiologicalReaction>
</comment>
<comment type="catalytic activity">
    <reaction evidence="3">
        <text>13-octadecanoyloxy-octadecanoate + H2O = 13-hydroxy-octadecanoate + octadecanoate + H(+)</text>
        <dbReference type="Rhea" id="RHEA:52084"/>
        <dbReference type="ChEBI" id="CHEBI:15377"/>
        <dbReference type="ChEBI" id="CHEBI:15378"/>
        <dbReference type="ChEBI" id="CHEBI:25629"/>
        <dbReference type="ChEBI" id="CHEBI:136304"/>
        <dbReference type="ChEBI" id="CHEBI:136335"/>
    </reaction>
    <physiologicalReaction direction="left-to-right" evidence="7">
        <dbReference type="Rhea" id="RHEA:52085"/>
    </physiologicalReaction>
</comment>
<comment type="catalytic activity">
    <reaction evidence="3">
        <text>9-(9Z-octadecenoyloxy)-octadecanoate + H2O = 9-hydroxy-octadecanoate + (9Z)-octadecenoate + H(+)</text>
        <dbReference type="Rhea" id="RHEA:52048"/>
        <dbReference type="ChEBI" id="CHEBI:15377"/>
        <dbReference type="ChEBI" id="CHEBI:15378"/>
        <dbReference type="ChEBI" id="CHEBI:30823"/>
        <dbReference type="ChEBI" id="CHEBI:136282"/>
        <dbReference type="ChEBI" id="CHEBI:136286"/>
    </reaction>
    <physiologicalReaction direction="left-to-right" evidence="7">
        <dbReference type="Rhea" id="RHEA:52049"/>
    </physiologicalReaction>
</comment>
<comment type="catalytic activity">
    <reaction evidence="3">
        <text>12-(9Z-octadecenoyloxy)-octadecanoate + H2O = 12-hydroxyoctadecanoate + (9Z)-octadecenoate + H(+)</text>
        <dbReference type="Rhea" id="RHEA:52060"/>
        <dbReference type="ChEBI" id="CHEBI:15377"/>
        <dbReference type="ChEBI" id="CHEBI:15378"/>
        <dbReference type="ChEBI" id="CHEBI:30823"/>
        <dbReference type="ChEBI" id="CHEBI:84201"/>
        <dbReference type="ChEBI" id="CHEBI:136302"/>
    </reaction>
    <physiologicalReaction direction="left-to-right" evidence="7">
        <dbReference type="Rhea" id="RHEA:52061"/>
    </physiologicalReaction>
</comment>
<comment type="catalytic activity">
    <reaction evidence="3">
        <text>13-(9Z-octadecenoyloxy)-octadecanoate + H2O = 13-hydroxy-octadecanoate + (9Z)-octadecenoate + H(+)</text>
        <dbReference type="Rhea" id="RHEA:52064"/>
        <dbReference type="ChEBI" id="CHEBI:15377"/>
        <dbReference type="ChEBI" id="CHEBI:15378"/>
        <dbReference type="ChEBI" id="CHEBI:30823"/>
        <dbReference type="ChEBI" id="CHEBI:136303"/>
        <dbReference type="ChEBI" id="CHEBI:136304"/>
    </reaction>
    <physiologicalReaction direction="left-to-right" evidence="7">
        <dbReference type="Rhea" id="RHEA:52065"/>
    </physiologicalReaction>
</comment>
<comment type="catalytic activity">
    <reaction evidence="3">
        <text>5-(9Z-hexadecenoyloxy)-octadecanoate + H2O = 5-hydroxy-octadecanoate + (9Z)-hexadecenoate + H(+)</text>
        <dbReference type="Rhea" id="RHEA:52092"/>
        <dbReference type="ChEBI" id="CHEBI:15377"/>
        <dbReference type="ChEBI" id="CHEBI:15378"/>
        <dbReference type="ChEBI" id="CHEBI:32372"/>
        <dbReference type="ChEBI" id="CHEBI:136369"/>
        <dbReference type="ChEBI" id="CHEBI:136370"/>
    </reaction>
    <physiologicalReaction direction="left-to-right" evidence="7">
        <dbReference type="Rhea" id="RHEA:52093"/>
    </physiologicalReaction>
</comment>
<comment type="activity regulation">
    <text evidence="3">Inhibited by N-hydroxyhydantoin carbamate JJH260 and beta-lactone KC01.</text>
</comment>
<comment type="interaction">
    <interactant intactId="EBI-3942989">
        <id>Q9NVV5</id>
    </interactant>
    <interactant intactId="EBI-947779">
        <id>Q96PM5</id>
        <label>RCHY1</label>
    </interactant>
    <organismsDiffer>false</organismsDiffer>
    <experiments>4</experiments>
</comment>
<comment type="interaction">
    <interactant intactId="EBI-11957045">
        <id>Q9NVV5-2</id>
    </interactant>
    <interactant intactId="EBI-715495">
        <id>P05090</id>
        <label>APOD</label>
    </interactant>
    <organismsDiffer>false</organismsDiffer>
    <experiments>3</experiments>
</comment>
<comment type="interaction">
    <interactant intactId="EBI-11957045">
        <id>Q9NVV5-2</id>
    </interactant>
    <interactant intactId="EBI-4290634">
        <id>Q9BQE5</id>
        <label>APOL2</label>
    </interactant>
    <organismsDiffer>false</organismsDiffer>
    <experiments>3</experiments>
</comment>
<comment type="interaction">
    <interactant intactId="EBI-11957045">
        <id>Q9NVV5-2</id>
    </interactant>
    <interactant intactId="EBI-13059134">
        <id>Q13520</id>
        <label>AQP6</label>
    </interactant>
    <organismsDiffer>false</organismsDiffer>
    <experiments>3</experiments>
</comment>
<comment type="interaction">
    <interactant intactId="EBI-11957045">
        <id>Q9NVV5-2</id>
    </interactant>
    <interactant intactId="EBI-17444777">
        <id>O43315</id>
        <label>AQP9</label>
    </interactant>
    <organismsDiffer>false</organismsDiffer>
    <experiments>3</experiments>
</comment>
<comment type="interaction">
    <interactant intactId="EBI-11957045">
        <id>Q9NVV5-2</id>
    </interactant>
    <interactant intactId="EBI-11343438">
        <id>Q3SXY8</id>
        <label>ARL13B</label>
    </interactant>
    <organismsDiffer>false</organismsDiffer>
    <experiments>3</experiments>
</comment>
<comment type="interaction">
    <interactant intactId="EBI-11957045">
        <id>Q9NVV5-2</id>
    </interactant>
    <interactant intactId="EBI-12808270">
        <id>P07307-3</id>
        <label>ASGR2</label>
    </interactant>
    <organismsDiffer>false</organismsDiffer>
    <experiments>3</experiments>
</comment>
<comment type="interaction">
    <interactant intactId="EBI-11957045">
        <id>Q9NVV5-2</id>
    </interactant>
    <interactant intactId="EBI-747430">
        <id>Q9BXK5</id>
        <label>BCL2L13</label>
    </interactant>
    <organismsDiffer>false</organismsDiffer>
    <experiments>3</experiments>
</comment>
<comment type="interaction">
    <interactant intactId="EBI-11957045">
        <id>Q9NVV5-2</id>
    </interactant>
    <interactant intactId="EBI-700794">
        <id>Q13323</id>
        <label>BIK</label>
    </interactant>
    <organismsDiffer>false</organismsDiffer>
    <experiments>3</experiments>
</comment>
<comment type="interaction">
    <interactant intactId="EBI-11957045">
        <id>Q9NVV5-2</id>
    </interactant>
    <interactant intactId="EBI-6657396">
        <id>P19397</id>
        <label>CD53</label>
    </interactant>
    <organismsDiffer>false</organismsDiffer>
    <experiments>3</experiments>
</comment>
<comment type="interaction">
    <interactant intactId="EBI-11957045">
        <id>Q9NVV5-2</id>
    </interactant>
    <interactant intactId="EBI-1045797">
        <id>Q8N5K1</id>
        <label>CISD2</label>
    </interactant>
    <organismsDiffer>false</organismsDiffer>
    <experiments>3</experiments>
</comment>
<comment type="interaction">
    <interactant intactId="EBI-11957045">
        <id>Q9NVV5-2</id>
    </interactant>
    <interactant intactId="EBI-740744">
        <id>O95471</id>
        <label>CLDN7</label>
    </interactant>
    <organismsDiffer>false</organismsDiffer>
    <experiments>3</experiments>
</comment>
<comment type="interaction">
    <interactant intactId="EBI-11957045">
        <id>Q9NVV5-2</id>
    </interactant>
    <interactant intactId="EBI-18013275">
        <id>Q7Z7G2</id>
        <label>CPLX4</label>
    </interactant>
    <organismsDiffer>false</organismsDiffer>
    <experiments>3</experiments>
</comment>
<comment type="interaction">
    <interactant intactId="EBI-11957045">
        <id>Q9NVV5-2</id>
    </interactant>
    <interactant intactId="EBI-1046040">
        <id>P00387</id>
        <label>CYB5R3</label>
    </interactant>
    <organismsDiffer>false</organismsDiffer>
    <experiments>3</experiments>
</comment>
<comment type="interaction">
    <interactant intactId="EBI-11957045">
        <id>Q9NVV5-2</id>
    </interactant>
    <interactant intactId="EBI-2680384">
        <id>Q9BQA9</id>
        <label>CYBC1</label>
    </interactant>
    <organismsDiffer>false</organismsDiffer>
    <experiments>3</experiments>
</comment>
<comment type="interaction">
    <interactant intactId="EBI-11957045">
        <id>Q9NVV5-2</id>
    </interactant>
    <interactant intactId="EBI-781551">
        <id>Q9Y282</id>
        <label>ERGIC3</label>
    </interactant>
    <organismsDiffer>false</organismsDiffer>
    <experiments>3</experiments>
</comment>
<comment type="interaction">
    <interactant intactId="EBI-11957045">
        <id>Q9NVV5-2</id>
    </interactant>
    <interactant intactId="EBI-18304435">
        <id>Q5JX71</id>
        <label>FAM209A</label>
    </interactant>
    <organismsDiffer>false</organismsDiffer>
    <experiments>3</experiments>
</comment>
<comment type="interaction">
    <interactant intactId="EBI-11957045">
        <id>Q9NVV5-2</id>
    </interactant>
    <interactant intactId="EBI-12142257">
        <id>Q8TBE3</id>
        <label>FNDC9</label>
    </interactant>
    <organismsDiffer>false</organismsDiffer>
    <experiments>3</experiments>
</comment>
<comment type="interaction">
    <interactant intactId="EBI-11957045">
        <id>Q9NVV5-2</id>
    </interactant>
    <interactant intactId="EBI-712073">
        <id>Q8NBJ4</id>
        <label>GOLM1</label>
    </interactant>
    <organismsDiffer>false</organismsDiffer>
    <experiments>3</experiments>
</comment>
<comment type="interaction">
    <interactant intactId="EBI-11957045">
        <id>Q9NVV5-2</id>
    </interactant>
    <interactant intactId="EBI-13345167">
        <id>Q8TDT2</id>
        <label>GPR152</label>
    </interactant>
    <organismsDiffer>false</organismsDiffer>
    <experiments>3</experiments>
</comment>
<comment type="interaction">
    <interactant intactId="EBI-11957045">
        <id>Q9NVV5-2</id>
    </interactant>
    <interactant intactId="EBI-11721746">
        <id>Q8TED1</id>
        <label>GPX8</label>
    </interactant>
    <organismsDiffer>false</organismsDiffer>
    <experiments>3</experiments>
</comment>
<comment type="interaction">
    <interactant intactId="EBI-11957045">
        <id>Q9NVV5-2</id>
    </interactant>
    <interactant intactId="EBI-11427100">
        <id>P31937</id>
        <label>HIBADH</label>
    </interactant>
    <organismsDiffer>false</organismsDiffer>
    <experiments>3</experiments>
</comment>
<comment type="interaction">
    <interactant intactId="EBI-11957045">
        <id>Q9NVV5-2</id>
    </interactant>
    <interactant intactId="EBI-18053395">
        <id>Q7Z5P4</id>
        <label>HSD17B13</label>
    </interactant>
    <organismsDiffer>false</organismsDiffer>
    <experiments>3</experiments>
</comment>
<comment type="interaction">
    <interactant intactId="EBI-11957045">
        <id>Q9NVV5-2</id>
    </interactant>
    <interactant intactId="EBI-725665">
        <id>Q9Y5U9</id>
        <label>IER3IP1</label>
    </interactant>
    <organismsDiffer>false</organismsDiffer>
    <experiments>3</experiments>
</comment>
<comment type="interaction">
    <interactant intactId="EBI-11957045">
        <id>Q9NVV5-2</id>
    </interactant>
    <interactant intactId="EBI-12017638">
        <id>P48051</id>
        <label>KCNJ6</label>
    </interactant>
    <organismsDiffer>false</organismsDiffer>
    <experiments>3</experiments>
</comment>
<comment type="interaction">
    <interactant intactId="EBI-11957045">
        <id>Q9NVV5-2</id>
    </interactant>
    <interactant intactId="EBI-8632435">
        <id>P43628</id>
        <label>KIR2DL3</label>
    </interactant>
    <organismsDiffer>false</organismsDiffer>
    <experiments>3</experiments>
</comment>
<comment type="interaction">
    <interactant intactId="EBI-11957045">
        <id>Q9NVV5-2</id>
    </interactant>
    <interactant intactId="EBI-2865663">
        <id>Q13571</id>
        <label>LAPTM5</label>
    </interactant>
    <organismsDiffer>false</organismsDiffer>
    <experiments>3</experiments>
</comment>
<comment type="interaction">
    <interactant intactId="EBI-11957045">
        <id>Q9NVV5-2</id>
    </interactant>
    <interactant intactId="EBI-17490413">
        <id>A8MZ59</id>
        <label>LEUTX</label>
    </interactant>
    <organismsDiffer>false</organismsDiffer>
    <experiments>3</experiments>
</comment>
<comment type="interaction">
    <interactant intactId="EBI-11957045">
        <id>Q9NVV5-2</id>
    </interactant>
    <interactant intactId="EBI-2830566">
        <id>Q9H400</id>
        <label>LIME1</label>
    </interactant>
    <organismsDiffer>false</organismsDiffer>
    <experiments>3</experiments>
</comment>
<comment type="interaction">
    <interactant intactId="EBI-11957045">
        <id>Q9NVV5-2</id>
    </interactant>
    <interactant intactId="EBI-10329546">
        <id>Q9Y5Y7</id>
        <label>LYVE1</label>
    </interactant>
    <organismsDiffer>false</organismsDiffer>
    <experiments>3</experiments>
</comment>
<comment type="interaction">
    <interactant intactId="EBI-11957045">
        <id>Q9NVV5-2</id>
    </interactant>
    <interactant intactId="EBI-11956541">
        <id>Q9GZY8-5</id>
        <label>MFF</label>
    </interactant>
    <organismsDiffer>false</organismsDiffer>
    <experiments>6</experiments>
</comment>
<comment type="interaction">
    <interactant intactId="EBI-11957045">
        <id>Q9NVV5-2</id>
    </interactant>
    <interactant intactId="EBI-1045440">
        <id>Q9HC36</id>
        <label>MRM3</label>
    </interactant>
    <organismsDiffer>false</organismsDiffer>
    <experiments>3</experiments>
</comment>
<comment type="interaction">
    <interactant intactId="EBI-11957045">
        <id>Q9NVV5-2</id>
    </interactant>
    <interactant intactId="EBI-716063">
        <id>Q13113</id>
        <label>PDZK1IP1</label>
    </interactant>
    <organismsDiffer>false</organismsDiffer>
    <experiments>3</experiments>
</comment>
<comment type="interaction">
    <interactant intactId="EBI-11957045">
        <id>Q9NVV5-2</id>
    </interactant>
    <interactant intactId="EBI-3920694">
        <id>Q9NR31</id>
        <label>SAR1A</label>
    </interactant>
    <organismsDiffer>false</organismsDiffer>
    <experiments>3</experiments>
</comment>
<comment type="interaction">
    <interactant intactId="EBI-11957045">
        <id>Q9NVV5-2</id>
    </interactant>
    <interactant intactId="EBI-1058865">
        <id>O75396</id>
        <label>SEC22B</label>
    </interactant>
    <organismsDiffer>false</organismsDiffer>
    <experiments>3</experiments>
</comment>
<comment type="interaction">
    <interactant intactId="EBI-11957045">
        <id>Q9NVV5-2</id>
    </interactant>
    <interactant intactId="EBI-12811757">
        <id>O95436-2</id>
        <label>SLC34A2</label>
    </interactant>
    <organismsDiffer>false</organismsDiffer>
    <experiments>3</experiments>
</comment>
<comment type="interaction">
    <interactant intactId="EBI-11957045">
        <id>Q9NVV5-2</id>
    </interactant>
    <interactant intactId="EBI-5235586">
        <id>Q8TBB6</id>
        <label>SLC7A14</label>
    </interactant>
    <organismsDiffer>false</organismsDiffer>
    <experiments>3</experiments>
</comment>
<comment type="interaction">
    <interactant intactId="EBI-11957045">
        <id>Q9NVV5-2</id>
    </interactant>
    <interactant intactId="EBI-1211440">
        <id>P27105</id>
        <label>STOM</label>
    </interactant>
    <organismsDiffer>false</organismsDiffer>
    <experiments>3</experiments>
</comment>
<comment type="interaction">
    <interactant intactId="EBI-11957045">
        <id>Q9NVV5-2</id>
    </interactant>
    <interactant intactId="EBI-712466">
        <id>Q16623</id>
        <label>STX1A</label>
    </interactant>
    <organismsDiffer>false</organismsDiffer>
    <experiments>3</experiments>
</comment>
<comment type="interaction">
    <interactant intactId="EBI-11957045">
        <id>Q9NVV5-2</id>
    </interactant>
    <interactant intactId="EBI-726691">
        <id>Q8WY91</id>
        <label>THAP4</label>
    </interactant>
    <organismsDiffer>false</organismsDiffer>
    <experiments>3</experiments>
</comment>
<comment type="interaction">
    <interactant intactId="EBI-11957045">
        <id>Q9NVV5-2</id>
    </interactant>
    <interactant intactId="EBI-941422">
        <id>P07204</id>
        <label>THBD</label>
    </interactant>
    <organismsDiffer>false</organismsDiffer>
    <experiments>3</experiments>
</comment>
<comment type="interaction">
    <interactant intactId="EBI-11957045">
        <id>Q9NVV5-2</id>
    </interactant>
    <interactant intactId="EBI-2821497">
        <id>Q9BVX2</id>
        <label>TMEM106C</label>
    </interactant>
    <organismsDiffer>false</organismsDiffer>
    <experiments>3</experiments>
</comment>
<comment type="interaction">
    <interactant intactId="EBI-11957045">
        <id>Q9NVV5-2</id>
    </interactant>
    <interactant intactId="EBI-11742770">
        <id>Q96HE8</id>
        <label>TMEM80</label>
    </interactant>
    <organismsDiffer>false</organismsDiffer>
    <experiments>3</experiments>
</comment>
<comment type="interaction">
    <interactant intactId="EBI-11957045">
        <id>Q9NVV5-2</id>
    </interactant>
    <interactant intactId="EBI-6447886">
        <id>Q9Y320</id>
        <label>TMX2</label>
    </interactant>
    <organismsDiffer>false</organismsDiffer>
    <experiments>3</experiments>
</comment>
<comment type="interaction">
    <interactant intactId="EBI-11957045">
        <id>Q9NVV5-2</id>
    </interactant>
    <interactant intactId="EBI-722343">
        <id>Q15836</id>
        <label>VAMP3</label>
    </interactant>
    <organismsDiffer>false</organismsDiffer>
    <experiments>3</experiments>
</comment>
<comment type="interaction">
    <interactant intactId="EBI-11957045">
        <id>Q9NVV5-2</id>
    </interactant>
    <interactant intactId="EBI-1188298">
        <id>O95292</id>
        <label>VAPB</label>
    </interactant>
    <organismsDiffer>false</organismsDiffer>
    <experiments>3</experiments>
</comment>
<comment type="subcellular location">
    <subcellularLocation>
        <location evidence="3">Cell membrane</location>
        <topology evidence="1">Multi-pass membrane protein</topology>
    </subcellularLocation>
</comment>
<comment type="alternative products">
    <event type="alternative splicing"/>
    <isoform>
        <id>Q9NVV5-2</id>
        <name>1</name>
        <sequence type="displayed"/>
    </isoform>
    <isoform>
        <id>Q9NVV5-1</id>
        <name>2</name>
        <sequence type="described" ref="VSP_060695"/>
    </isoform>
    <isoform>
        <id>Q9NVV5-3</id>
        <name>3</name>
        <sequence type="described" ref="VSP_060690"/>
    </isoform>
    <isoform>
        <id>Q9NVV5-4</id>
        <name>4</name>
        <sequence type="described" ref="VSP_060689"/>
    </isoform>
    <isoform>
        <id>Q9NVV5-5</id>
        <name>5</name>
        <sequence type="described" ref="VSP_060693 VSP_060694"/>
    </isoform>
    <isoform>
        <id>Q9NVV5-6</id>
        <name>6</name>
        <sequence type="described" ref="VSP_060691 VSP_060692"/>
    </isoform>
</comment>
<comment type="tissue specificity">
    <text evidence="2">Highly expressed in heart, ovary, testis, liver, and kidney, at lower levels in spleen, prostate, brain, skeletal muscle, pancreas, small intestine and colon, and undetected in peripheral blood leukocytes, thymus, lung and placenta. AIG1 expression is higher in hair follicles from males than from females.</text>
</comment>
<comment type="induction">
    <text evidence="2">By dihydrotestosterone (DHT).</text>
</comment>
<comment type="similarity">
    <text evidence="5">Belongs to the AIG1 family.</text>
</comment>
<comment type="sequence caution" evidence="5">
    <conflict type="frameshift">
        <sequence resource="EMBL-CDS" id="AAD34098"/>
    </conflict>
</comment>
<comment type="sequence caution" evidence="5">
    <conflict type="erroneous initiation">
        <sequence resource="EMBL-CDS" id="CAE45823"/>
    </conflict>
    <text>Extended N-terminus.</text>
</comment>
<protein>
    <recommendedName>
        <fullName>Androgen-induced gene 1 protein</fullName>
        <shortName>AIG-1</shortName>
    </recommendedName>
    <alternativeName>
        <fullName evidence="4">Fatty acid esters of hydroxy fatty acids hydrolase AIG1</fullName>
        <shortName evidence="4">FAHFA hydrolase AIG1</shortName>
        <ecNumber evidence="3">3.1.-.-</ecNumber>
    </alternativeName>
</protein>
<feature type="chain" id="PRO_0000190098" description="Androgen-induced gene 1 protein">
    <location>
        <begin position="1"/>
        <end position="238"/>
    </location>
</feature>
<feature type="topological domain" description="Cytoplasmic" evidence="7">
    <location>
        <begin position="1"/>
        <end position="12"/>
    </location>
</feature>
<feature type="transmembrane region" description="Helical" evidence="1">
    <location>
        <begin position="13"/>
        <end position="30"/>
    </location>
</feature>
<feature type="topological domain" description="Extracellular" evidence="7">
    <location>
        <begin position="31"/>
        <end position="44"/>
    </location>
</feature>
<feature type="transmembrane region" description="Helical" evidence="1">
    <location>
        <begin position="45"/>
        <end position="67"/>
    </location>
</feature>
<feature type="topological domain" description="Cytoplasmic" evidence="7">
    <location>
        <begin position="68"/>
        <end position="87"/>
    </location>
</feature>
<feature type="transmembrane region" description="Helical" evidence="1">
    <location>
        <begin position="88"/>
        <end position="110"/>
    </location>
</feature>
<feature type="topological domain" description="Extracellular" evidence="7">
    <location>
        <begin position="111"/>
        <end position="124"/>
    </location>
</feature>
<feature type="transmembrane region" description="Helical" evidence="1">
    <location>
        <begin position="125"/>
        <end position="144"/>
    </location>
</feature>
<feature type="topological domain" description="Cytoplasmic" evidence="7">
    <location>
        <begin position="145"/>
        <end position="156"/>
    </location>
</feature>
<feature type="transmembrane region" description="Helical" evidence="1">
    <location>
        <begin position="157"/>
        <end position="179"/>
    </location>
</feature>
<feature type="topological domain" description="Extracellular" evidence="7">
    <location>
        <begin position="180"/>
        <end position="193"/>
    </location>
</feature>
<feature type="transmembrane region" description="Helical" evidence="1">
    <location>
        <begin position="194"/>
        <end position="216"/>
    </location>
</feature>
<feature type="topological domain" description="Cytoplasmic" evidence="7">
    <location>
        <begin position="217"/>
        <end position="238"/>
    </location>
</feature>
<feature type="site" description="Important for catalytic activity" evidence="3">
    <location>
        <position position="43"/>
    </location>
</feature>
<feature type="site" description="Important for catalytic activity" evidence="3">
    <location>
        <position position="134"/>
    </location>
</feature>
<feature type="splice variant" id="VSP_060689" description="In isoform 4." evidence="6">
    <location>
        <begin position="1"/>
        <end position="10"/>
    </location>
</feature>
<feature type="splice variant" id="VSP_060690" description="In isoform 3." evidence="5">
    <location>
        <begin position="48"/>
        <end position="99"/>
    </location>
</feature>
<feature type="splice variant" id="VSP_060691" description="In isoform 6." evidence="5">
    <original>H</original>
    <variation>L</variation>
    <location>
        <position position="134"/>
    </location>
</feature>
<feature type="splice variant" id="VSP_060692" description="In isoform 6." evidence="5">
    <location>
        <begin position="135"/>
        <end position="238"/>
    </location>
</feature>
<feature type="splice variant" id="VSP_060693" description="In isoform 5." evidence="5">
    <original>TTV</original>
    <variation>FKA</variation>
    <location>
        <begin position="135"/>
        <end position="137"/>
    </location>
</feature>
<feature type="splice variant" id="VSP_060694" description="In isoform 5." evidence="5">
    <location>
        <begin position="138"/>
        <end position="238"/>
    </location>
</feature>
<feature type="splice variant" id="VSP_060695" description="In isoform 2." evidence="5">
    <original>SMEEEKEKPKLE</original>
    <variation>KPPSWQDMKIKFMYLGPSS</variation>
    <location>
        <begin position="227"/>
        <end position="238"/>
    </location>
</feature>
<feature type="sequence variant" id="VAR_057502" description="In dbSNP:rs1053193.">
    <original>Q</original>
    <variation>E</variation>
    <location>
        <position position="151"/>
    </location>
</feature>
<feature type="mutagenesis site" description="Loss of hydrolase activity." evidence="3">
    <original>T</original>
    <variation>A</variation>
    <location>
        <position position="43"/>
    </location>
</feature>
<feature type="mutagenesis site" description="Loss of hydrolase activity." evidence="3">
    <original>H</original>
    <variation>A</variation>
    <location>
        <position position="134"/>
    </location>
</feature>
<feature type="sequence conflict" description="In Ref. 1; AAD41087." evidence="5" ref="1">
    <original>S</original>
    <variation>I</variation>
    <location>
        <position position="70"/>
    </location>
</feature>
<feature type="sequence conflict" description="In Ref. 3; BAA91640." evidence="5" ref="3">
    <original>I</original>
    <variation>F</variation>
    <location>
        <position position="191"/>
    </location>
</feature>
<accession>Q9NVV5</accession>
<accession>B4DPX2</accession>
<accession>C9J569</accession>
<accession>Q5T2H2</accession>
<accession>Q6N047</accession>
<accession>Q7Z378</accession>
<accession>Q8TB14</accession>
<accession>Q9Y3A9</accession>
<accession>Q9Y5B4</accession>
<organism>
    <name type="scientific">Homo sapiens</name>
    <name type="common">Human</name>
    <dbReference type="NCBI Taxonomy" id="9606"/>
    <lineage>
        <taxon>Eukaryota</taxon>
        <taxon>Metazoa</taxon>
        <taxon>Chordata</taxon>
        <taxon>Craniata</taxon>
        <taxon>Vertebrata</taxon>
        <taxon>Euteleostomi</taxon>
        <taxon>Mammalia</taxon>
        <taxon>Eutheria</taxon>
        <taxon>Euarchontoglires</taxon>
        <taxon>Primates</taxon>
        <taxon>Haplorrhini</taxon>
        <taxon>Catarrhini</taxon>
        <taxon>Hominidae</taxon>
        <taxon>Homo</taxon>
    </lineage>
</organism>
<dbReference type="EC" id="3.1.-.-" evidence="3"/>
<dbReference type="EMBL" id="AF153605">
    <property type="protein sequence ID" value="AAD41087.1"/>
    <property type="molecule type" value="mRNA"/>
</dbReference>
<dbReference type="EMBL" id="AF151861">
    <property type="protein sequence ID" value="AAD34098.1"/>
    <property type="status" value="ALT_FRAME"/>
    <property type="molecule type" value="mRNA"/>
</dbReference>
<dbReference type="EMBL" id="AK001347">
    <property type="protein sequence ID" value="BAA91640.1"/>
    <property type="molecule type" value="mRNA"/>
</dbReference>
<dbReference type="EMBL" id="BX538067">
    <property type="protein sequence ID" value="CAD97997.1"/>
    <property type="molecule type" value="mRNA"/>
</dbReference>
<dbReference type="EMBL" id="BX640703">
    <property type="protein sequence ID" value="CAE45823.1"/>
    <property type="status" value="ALT_INIT"/>
    <property type="molecule type" value="mRNA"/>
</dbReference>
<dbReference type="EMBL" id="AK298533">
    <property type="protein sequence ID" value="BAG60734.1"/>
    <property type="molecule type" value="mRNA"/>
</dbReference>
<dbReference type="EMBL" id="AL023581">
    <property type="status" value="NOT_ANNOTATED_CDS"/>
    <property type="molecule type" value="Genomic_DNA"/>
</dbReference>
<dbReference type="EMBL" id="AL136116">
    <property type="status" value="NOT_ANNOTATED_CDS"/>
    <property type="molecule type" value="Genomic_DNA"/>
</dbReference>
<dbReference type="EMBL" id="AL391726">
    <property type="status" value="NOT_ANNOTATED_CDS"/>
    <property type="molecule type" value="Genomic_DNA"/>
</dbReference>
<dbReference type="EMBL" id="AL450335">
    <property type="status" value="NOT_ANNOTATED_CDS"/>
    <property type="molecule type" value="Genomic_DNA"/>
</dbReference>
<dbReference type="EMBL" id="BC025278">
    <property type="protein sequence ID" value="AAH25278.1"/>
    <property type="molecule type" value="mRNA"/>
</dbReference>
<dbReference type="CCDS" id="CCDS5198.1">
    <molecule id="Q9NVV5-2"/>
</dbReference>
<dbReference type="CCDS" id="CCDS69215.1">
    <molecule id="Q9NVV5-6"/>
</dbReference>
<dbReference type="CCDS" id="CCDS69216.1">
    <molecule id="Q9NVV5-5"/>
</dbReference>
<dbReference type="CCDS" id="CCDS94014.1">
    <molecule id="Q9NVV5-1"/>
</dbReference>
<dbReference type="RefSeq" id="NP_001273516.1">
    <molecule id="Q9NVV5-4"/>
    <property type="nucleotide sequence ID" value="NM_001286587.2"/>
</dbReference>
<dbReference type="RefSeq" id="NP_001273517.1">
    <molecule id="Q9NVV5-6"/>
    <property type="nucleotide sequence ID" value="NM_001286588.2"/>
</dbReference>
<dbReference type="RefSeq" id="NP_001273518.1">
    <molecule id="Q9NVV5-5"/>
    <property type="nucleotide sequence ID" value="NM_001286589.2"/>
</dbReference>
<dbReference type="RefSeq" id="NP_001353276.1">
    <molecule id="Q9NVV5-1"/>
    <property type="nucleotide sequence ID" value="NM_001366347.1"/>
</dbReference>
<dbReference type="RefSeq" id="NP_001353284.1">
    <molecule id="Q9NVV5-3"/>
    <property type="nucleotide sequence ID" value="NM_001366355.1"/>
</dbReference>
<dbReference type="RefSeq" id="NP_057192.2">
    <molecule id="Q9NVV5-2"/>
    <property type="nucleotide sequence ID" value="NM_016108.3"/>
</dbReference>
<dbReference type="BioGRID" id="119519">
    <property type="interactions" value="61"/>
</dbReference>
<dbReference type="FunCoup" id="Q9NVV5">
    <property type="interactions" value="961"/>
</dbReference>
<dbReference type="IntAct" id="Q9NVV5">
    <property type="interactions" value="56"/>
</dbReference>
<dbReference type="MINT" id="Q9NVV5"/>
<dbReference type="STRING" id="9606.ENSP00000350509"/>
<dbReference type="BindingDB" id="Q9NVV5"/>
<dbReference type="SwissLipids" id="SLP:000001682"/>
<dbReference type="TCDB" id="9.B.203.1.1">
    <property type="family name" value="the aig1 lipid hydrolase (aig1) family"/>
</dbReference>
<dbReference type="iPTMnet" id="Q9NVV5"/>
<dbReference type="PhosphoSitePlus" id="Q9NVV5"/>
<dbReference type="SwissPalm" id="Q9NVV5"/>
<dbReference type="BioMuta" id="AIG1"/>
<dbReference type="DMDM" id="56748615"/>
<dbReference type="jPOST" id="Q9NVV5"/>
<dbReference type="MassIVE" id="Q9NVV5"/>
<dbReference type="PaxDb" id="9606-ENSP00000350509"/>
<dbReference type="PeptideAtlas" id="Q9NVV5"/>
<dbReference type="ProteomicsDB" id="4823"/>
<dbReference type="ProteomicsDB" id="82866">
    <molecule id="Q9NVV5-1"/>
</dbReference>
<dbReference type="ProteomicsDB" id="82867">
    <molecule id="Q9NVV5-2"/>
</dbReference>
<dbReference type="ProteomicsDB" id="82868">
    <molecule id="Q9NVV5-3"/>
</dbReference>
<dbReference type="ProteomicsDB" id="82869">
    <molecule id="Q9NVV5-4"/>
</dbReference>
<dbReference type="ProteomicsDB" id="82870">
    <molecule id="Q9NVV5-5"/>
</dbReference>
<dbReference type="Pumba" id="Q9NVV5"/>
<dbReference type="TopDownProteomics" id="Q9NVV5-4">
    <molecule id="Q9NVV5-4"/>
</dbReference>
<dbReference type="Antibodypedia" id="53852">
    <property type="antibodies" value="149 antibodies from 30 providers"/>
</dbReference>
<dbReference type="DNASU" id="51390"/>
<dbReference type="Ensembl" id="ENST00000275235.8">
    <molecule id="Q9NVV5-1"/>
    <property type="protein sequence ID" value="ENSP00000275235.4"/>
    <property type="gene ID" value="ENSG00000146416.19"/>
</dbReference>
<dbReference type="Ensembl" id="ENST00000357847.9">
    <molecule id="Q9NVV5-2"/>
    <property type="protein sequence ID" value="ENSP00000350509.4"/>
    <property type="gene ID" value="ENSG00000146416.19"/>
</dbReference>
<dbReference type="Ensembl" id="ENST00000494282.6">
    <molecule id="Q9NVV5-5"/>
    <property type="protein sequence ID" value="ENSP00000473952.1"/>
    <property type="gene ID" value="ENSG00000146416.19"/>
</dbReference>
<dbReference type="Ensembl" id="ENST00000629020.2">
    <molecule id="Q9NVV5-6"/>
    <property type="protein sequence ID" value="ENSP00000485875.1"/>
    <property type="gene ID" value="ENSG00000146416.19"/>
</dbReference>
<dbReference type="GeneID" id="51390"/>
<dbReference type="KEGG" id="hsa:51390"/>
<dbReference type="MANE-Select" id="ENST00000357847.9">
    <property type="protein sequence ID" value="ENSP00000350509.4"/>
    <property type="RefSeq nucleotide sequence ID" value="NM_016108.4"/>
    <property type="RefSeq protein sequence ID" value="NP_057192.2"/>
</dbReference>
<dbReference type="UCSC" id="uc003qjg.5">
    <molecule id="Q9NVV5-2"/>
    <property type="organism name" value="human"/>
</dbReference>
<dbReference type="AGR" id="HGNC:21607"/>
<dbReference type="CTD" id="51390"/>
<dbReference type="DisGeNET" id="51390"/>
<dbReference type="GeneCards" id="AIG1"/>
<dbReference type="HGNC" id="HGNC:21607">
    <property type="gene designation" value="AIG1"/>
</dbReference>
<dbReference type="HPA" id="ENSG00000146416">
    <property type="expression patterns" value="Tissue enhanced (liver)"/>
</dbReference>
<dbReference type="MIM" id="608514">
    <property type="type" value="gene"/>
</dbReference>
<dbReference type="neXtProt" id="NX_Q9NVV5"/>
<dbReference type="OpenTargets" id="ENSG00000146416"/>
<dbReference type="PharmGKB" id="PA134991331"/>
<dbReference type="VEuPathDB" id="HostDB:ENSG00000146416"/>
<dbReference type="eggNOG" id="KOG3989">
    <property type="taxonomic scope" value="Eukaryota"/>
</dbReference>
<dbReference type="GeneTree" id="ENSGT00940000158696"/>
<dbReference type="HOGENOM" id="CLU_073346_0_0_1"/>
<dbReference type="InParanoid" id="Q9NVV5"/>
<dbReference type="OMA" id="MRTTHHK"/>
<dbReference type="OrthoDB" id="1898221at2759"/>
<dbReference type="PAN-GO" id="Q9NVV5">
    <property type="GO annotations" value="1 GO annotation based on evolutionary models"/>
</dbReference>
<dbReference type="PhylomeDB" id="Q9NVV5"/>
<dbReference type="TreeFam" id="TF318170"/>
<dbReference type="PathwayCommons" id="Q9NVV5"/>
<dbReference type="SignaLink" id="Q9NVV5"/>
<dbReference type="BioGRID-ORCS" id="51390">
    <property type="hits" value="8 hits in 1150 CRISPR screens"/>
</dbReference>
<dbReference type="ChiTaRS" id="AIG1">
    <property type="organism name" value="human"/>
</dbReference>
<dbReference type="GeneWiki" id="AIG1"/>
<dbReference type="GenomeRNAi" id="51390"/>
<dbReference type="Pharos" id="Q9NVV5">
    <property type="development level" value="Tbio"/>
</dbReference>
<dbReference type="PRO" id="PR:Q9NVV5"/>
<dbReference type="Proteomes" id="UP000005640">
    <property type="component" value="Chromosome 6"/>
</dbReference>
<dbReference type="RNAct" id="Q9NVV5">
    <property type="molecule type" value="protein"/>
</dbReference>
<dbReference type="Bgee" id="ENSG00000146416">
    <property type="expression patterns" value="Expressed in buccal mucosa cell and 188 other cell types or tissues"/>
</dbReference>
<dbReference type="ExpressionAtlas" id="Q9NVV5">
    <property type="expression patterns" value="baseline and differential"/>
</dbReference>
<dbReference type="GO" id="GO:0012505">
    <property type="term" value="C:endomembrane system"/>
    <property type="evidence" value="ECO:0000318"/>
    <property type="project" value="GO_Central"/>
</dbReference>
<dbReference type="GO" id="GO:0016020">
    <property type="term" value="C:membrane"/>
    <property type="evidence" value="ECO:0000314"/>
    <property type="project" value="UniProtKB"/>
</dbReference>
<dbReference type="GO" id="GO:0005886">
    <property type="term" value="C:plasma membrane"/>
    <property type="evidence" value="ECO:0007669"/>
    <property type="project" value="UniProtKB-SubCell"/>
</dbReference>
<dbReference type="GO" id="GO:0016787">
    <property type="term" value="F:hydrolase activity"/>
    <property type="evidence" value="ECO:0000315"/>
    <property type="project" value="UniProtKB"/>
</dbReference>
<dbReference type="GO" id="GO:0042758">
    <property type="term" value="P:long-chain fatty acid catabolic process"/>
    <property type="evidence" value="ECO:0000315"/>
    <property type="project" value="UniProtKB"/>
</dbReference>
<dbReference type="InterPro" id="IPR006838">
    <property type="entry name" value="ADTRP_AIG1"/>
</dbReference>
<dbReference type="PANTHER" id="PTHR10989:SF11">
    <property type="entry name" value="ANDROGEN-INDUCED GENE 1 PROTEIN"/>
    <property type="match status" value="1"/>
</dbReference>
<dbReference type="PANTHER" id="PTHR10989">
    <property type="entry name" value="ANDROGEN-INDUCED PROTEIN 1-RELATED"/>
    <property type="match status" value="1"/>
</dbReference>
<dbReference type="Pfam" id="PF04750">
    <property type="entry name" value="Far-17a_AIG1"/>
    <property type="match status" value="1"/>
</dbReference>
<name>AIG1_HUMAN</name>
<sequence length="238" mass="27458">MALVPCQVLRMAILLSYCSILCNYKAIEMPSHQTYGGSWKFLTFIDLVIQAVFFGICVLTDLSSLLTRGSGNQEQERQLKKLISLRDWMLAVLAFPVGVFVVAVFWIIYAYDREMIYPKLLDNFIPGWLNHGMHTTVLPFILIEMRTSHHQYPSRSSGLTAICTFSVGYILWVCWVHHVTGMWVYPFLEHIGPGARIIFFGSTTILMNFLYLLGEVLNNYIWDTQKSMEEEKEKPKLE</sequence>
<proteinExistence type="evidence at protein level"/>